<name>YLZ2_CAEEL</name>
<feature type="chain" id="PRO_0000065335" description="Uncharacterized protein F42H10.2">
    <location>
        <begin position="1"/>
        <end position="115"/>
    </location>
</feature>
<feature type="domain" description="CHCH" evidence="1">
    <location>
        <begin position="63"/>
        <end position="108"/>
    </location>
</feature>
<feature type="short sequence motif" description="Cx9C motif 1" evidence="1">
    <location>
        <begin position="66"/>
        <end position="76"/>
    </location>
</feature>
<feature type="short sequence motif" description="Cx9C motif 2" evidence="1">
    <location>
        <begin position="90"/>
        <end position="100"/>
    </location>
</feature>
<feature type="disulfide bond" evidence="1">
    <location>
        <begin position="66"/>
        <end position="100"/>
    </location>
</feature>
<feature type="disulfide bond" evidence="1">
    <location>
        <begin position="76"/>
        <end position="90"/>
    </location>
</feature>
<gene>
    <name type="ORF">F42H10.2</name>
</gene>
<evidence type="ECO:0000255" key="1">
    <source>
        <dbReference type="PROSITE-ProRule" id="PRU01150"/>
    </source>
</evidence>
<organism>
    <name type="scientific">Caenorhabditis elegans</name>
    <dbReference type="NCBI Taxonomy" id="6239"/>
    <lineage>
        <taxon>Eukaryota</taxon>
        <taxon>Metazoa</taxon>
        <taxon>Ecdysozoa</taxon>
        <taxon>Nematoda</taxon>
        <taxon>Chromadorea</taxon>
        <taxon>Rhabditida</taxon>
        <taxon>Rhabditina</taxon>
        <taxon>Rhabditomorpha</taxon>
        <taxon>Rhabditoidea</taxon>
        <taxon>Rhabditidae</taxon>
        <taxon>Peloderinae</taxon>
        <taxon>Caenorhabditis</taxon>
    </lineage>
</organism>
<dbReference type="EMBL" id="FO080327">
    <property type="protein sequence ID" value="CCD62882.1"/>
    <property type="molecule type" value="Genomic_DNA"/>
</dbReference>
<dbReference type="PIR" id="S44648">
    <property type="entry name" value="S44648"/>
</dbReference>
<dbReference type="RefSeq" id="NP_498876.1">
    <property type="nucleotide sequence ID" value="NM_066475.3"/>
</dbReference>
<dbReference type="SMR" id="P34415"/>
<dbReference type="BioGRID" id="50444">
    <property type="interactions" value="7"/>
</dbReference>
<dbReference type="FunCoup" id="P34415">
    <property type="interactions" value="149"/>
</dbReference>
<dbReference type="STRING" id="6239.F42H10.2.1"/>
<dbReference type="PaxDb" id="6239-F42H10.2"/>
<dbReference type="PeptideAtlas" id="P34415"/>
<dbReference type="EnsemblMetazoa" id="F42H10.2.1">
    <property type="protein sequence ID" value="F42H10.2.1"/>
    <property type="gene ID" value="WBGene00018366"/>
</dbReference>
<dbReference type="GeneID" id="185684"/>
<dbReference type="KEGG" id="cel:CELE_F42H10.2"/>
<dbReference type="UCSC" id="F42H10.2">
    <property type="organism name" value="c. elegans"/>
</dbReference>
<dbReference type="AGR" id="WB:WBGene00018366"/>
<dbReference type="CTD" id="185684"/>
<dbReference type="WormBase" id="F42H10.2">
    <property type="protein sequence ID" value="CE00164"/>
    <property type="gene ID" value="WBGene00018366"/>
</dbReference>
<dbReference type="eggNOG" id="KOG4149">
    <property type="taxonomic scope" value="Eukaryota"/>
</dbReference>
<dbReference type="GeneTree" id="ENSGT00730000113322"/>
<dbReference type="HOGENOM" id="CLU_140555_0_0_1"/>
<dbReference type="InParanoid" id="P34415"/>
<dbReference type="OMA" id="MECVTRT"/>
<dbReference type="OrthoDB" id="7481291at2759"/>
<dbReference type="PhylomeDB" id="P34415"/>
<dbReference type="PRO" id="PR:P34415"/>
<dbReference type="Proteomes" id="UP000001940">
    <property type="component" value="Chromosome III"/>
</dbReference>
<dbReference type="Bgee" id="WBGene00018366">
    <property type="expression patterns" value="Expressed in germ line (C elegans) and 4 other cell types or tissues"/>
</dbReference>
<dbReference type="GO" id="GO:0005758">
    <property type="term" value="C:mitochondrial intermembrane space"/>
    <property type="evidence" value="ECO:0000318"/>
    <property type="project" value="GO_Central"/>
</dbReference>
<dbReference type="GO" id="GO:0015035">
    <property type="term" value="F:protein-disulfide reductase activity"/>
    <property type="evidence" value="ECO:0000318"/>
    <property type="project" value="GO_Central"/>
</dbReference>
<dbReference type="GO" id="GO:0045041">
    <property type="term" value="P:protein import into mitochondrial intermembrane space"/>
    <property type="evidence" value="ECO:0000318"/>
    <property type="project" value="GO_Central"/>
</dbReference>
<dbReference type="FunFam" id="1.10.287.2900:FF:000006">
    <property type="entry name" value="Protein CBG18121"/>
    <property type="match status" value="1"/>
</dbReference>
<dbReference type="Gene3D" id="1.10.287.2900">
    <property type="match status" value="1"/>
</dbReference>
<dbReference type="InterPro" id="IPR010625">
    <property type="entry name" value="CHCH"/>
</dbReference>
<dbReference type="InterPro" id="IPR039289">
    <property type="entry name" value="CHCHD4"/>
</dbReference>
<dbReference type="PANTHER" id="PTHR21622">
    <property type="entry name" value="COILED-COIL-HELIX-COILED-COIL-HELIX DOMAIN CONTAINING 4"/>
    <property type="match status" value="1"/>
</dbReference>
<dbReference type="PANTHER" id="PTHR21622:SF2">
    <property type="entry name" value="PROTEIN CBG18121"/>
    <property type="match status" value="1"/>
</dbReference>
<dbReference type="Pfam" id="PF06747">
    <property type="entry name" value="CHCH"/>
    <property type="match status" value="1"/>
</dbReference>
<dbReference type="PROSITE" id="PS51808">
    <property type="entry name" value="CHCH"/>
    <property type="match status" value="1"/>
</dbReference>
<protein>
    <recommendedName>
        <fullName>Uncharacterized protein F42H10.2</fullName>
    </recommendedName>
</protein>
<proteinExistence type="predicted"/>
<reference key="1">
    <citation type="journal article" date="1994" name="Nature">
        <title>2.2 Mb of contiguous nucleotide sequence from chromosome III of C. elegans.</title>
        <authorList>
            <person name="Wilson R."/>
            <person name="Ainscough R."/>
            <person name="Anderson K."/>
            <person name="Baynes C."/>
            <person name="Berks M."/>
            <person name="Bonfield J."/>
            <person name="Burton J."/>
            <person name="Connell M."/>
            <person name="Copsey T."/>
            <person name="Cooper J."/>
            <person name="Coulson A."/>
            <person name="Craxton M."/>
            <person name="Dear S."/>
            <person name="Du Z."/>
            <person name="Durbin R."/>
            <person name="Favello A."/>
            <person name="Fraser A."/>
            <person name="Fulton L."/>
            <person name="Gardner A."/>
            <person name="Green P."/>
            <person name="Hawkins T."/>
            <person name="Hillier L."/>
            <person name="Jier M."/>
            <person name="Johnston L."/>
            <person name="Jones M."/>
            <person name="Kershaw J."/>
            <person name="Kirsten J."/>
            <person name="Laisster N."/>
            <person name="Latreille P."/>
            <person name="Lightning J."/>
            <person name="Lloyd C."/>
            <person name="Mortimore B."/>
            <person name="O'Callaghan M."/>
            <person name="Parsons J."/>
            <person name="Percy C."/>
            <person name="Rifken L."/>
            <person name="Roopra A."/>
            <person name="Saunders D."/>
            <person name="Shownkeen R."/>
            <person name="Sims M."/>
            <person name="Smaldon N."/>
            <person name="Smith A."/>
            <person name="Smith M."/>
            <person name="Sonnhammer E."/>
            <person name="Staden R."/>
            <person name="Sulston J."/>
            <person name="Thierry-Mieg J."/>
            <person name="Thomas K."/>
            <person name="Vaudin M."/>
            <person name="Vaughan K."/>
            <person name="Waterston R."/>
            <person name="Watson A."/>
            <person name="Weinstock L."/>
            <person name="Wilkinson-Sproat J."/>
            <person name="Wohldman P."/>
        </authorList>
    </citation>
    <scope>NUCLEOTIDE SEQUENCE [LARGE SCALE GENOMIC DNA]</scope>
    <source>
        <strain>Bristol N2</strain>
    </source>
</reference>
<reference key="2">
    <citation type="journal article" date="1998" name="Science">
        <title>Genome sequence of the nematode C. elegans: a platform for investigating biology.</title>
        <authorList>
            <consortium name="The C. elegans sequencing consortium"/>
        </authorList>
    </citation>
    <scope>NUCLEOTIDE SEQUENCE [LARGE SCALE GENOMIC DNA]</scope>
    <source>
        <strain>Bristol N2</strain>
    </source>
</reference>
<keyword id="KW-1015">Disulfide bond</keyword>
<keyword id="KW-1185">Reference proteome</keyword>
<accession>P34415</accession>
<sequence length="115" mass="12755">MASTKDEVVRMSVDEYWEDIKDDYLIQLANTDPNEVYPSNNPGPTTADGQINFECHCVGHLVGSPCGFEFREAITCQKTNSDGEIEQGACGKELMSFMECVTRTQCFGTGDNDKK</sequence>